<protein>
    <recommendedName>
        <fullName evidence="1">Recombination-associated protein RdgC</fullName>
    </recommendedName>
</protein>
<evidence type="ECO:0000255" key="1">
    <source>
        <dbReference type="HAMAP-Rule" id="MF_00194"/>
    </source>
</evidence>
<accession>Q0HGN5</accession>
<name>RDGC_SHESM</name>
<dbReference type="EMBL" id="CP000446">
    <property type="protein sequence ID" value="ABI39782.1"/>
    <property type="molecule type" value="Genomic_DNA"/>
</dbReference>
<dbReference type="RefSeq" id="WP_011623462.1">
    <property type="nucleotide sequence ID" value="NC_008321.1"/>
</dbReference>
<dbReference type="SMR" id="Q0HGN5"/>
<dbReference type="KEGG" id="she:Shewmr4_2711"/>
<dbReference type="HOGENOM" id="CLU_052038_1_1_6"/>
<dbReference type="GO" id="GO:0043590">
    <property type="term" value="C:bacterial nucleoid"/>
    <property type="evidence" value="ECO:0007669"/>
    <property type="project" value="TreeGrafter"/>
</dbReference>
<dbReference type="GO" id="GO:0005737">
    <property type="term" value="C:cytoplasm"/>
    <property type="evidence" value="ECO:0007669"/>
    <property type="project" value="UniProtKB-UniRule"/>
</dbReference>
<dbReference type="GO" id="GO:0003690">
    <property type="term" value="F:double-stranded DNA binding"/>
    <property type="evidence" value="ECO:0007669"/>
    <property type="project" value="TreeGrafter"/>
</dbReference>
<dbReference type="GO" id="GO:0006310">
    <property type="term" value="P:DNA recombination"/>
    <property type="evidence" value="ECO:0007669"/>
    <property type="project" value="UniProtKB-UniRule"/>
</dbReference>
<dbReference type="GO" id="GO:0000018">
    <property type="term" value="P:regulation of DNA recombination"/>
    <property type="evidence" value="ECO:0007669"/>
    <property type="project" value="TreeGrafter"/>
</dbReference>
<dbReference type="HAMAP" id="MF_00194">
    <property type="entry name" value="RdgC"/>
    <property type="match status" value="1"/>
</dbReference>
<dbReference type="InterPro" id="IPR007476">
    <property type="entry name" value="RdgC"/>
</dbReference>
<dbReference type="NCBIfam" id="NF001462">
    <property type="entry name" value="PRK00321.1-3"/>
    <property type="match status" value="1"/>
</dbReference>
<dbReference type="NCBIfam" id="NF001464">
    <property type="entry name" value="PRK00321.1-5"/>
    <property type="match status" value="1"/>
</dbReference>
<dbReference type="PANTHER" id="PTHR38103">
    <property type="entry name" value="RECOMBINATION-ASSOCIATED PROTEIN RDGC"/>
    <property type="match status" value="1"/>
</dbReference>
<dbReference type="PANTHER" id="PTHR38103:SF1">
    <property type="entry name" value="RECOMBINATION-ASSOCIATED PROTEIN RDGC"/>
    <property type="match status" value="1"/>
</dbReference>
<dbReference type="Pfam" id="PF04381">
    <property type="entry name" value="RdgC"/>
    <property type="match status" value="1"/>
</dbReference>
<proteinExistence type="inferred from homology"/>
<keyword id="KW-0963">Cytoplasm</keyword>
<keyword id="KW-0233">DNA recombination</keyword>
<reference key="1">
    <citation type="submission" date="2006-08" db="EMBL/GenBank/DDBJ databases">
        <title>Complete sequence of Shewanella sp. MR-4.</title>
        <authorList>
            <consortium name="US DOE Joint Genome Institute"/>
            <person name="Copeland A."/>
            <person name="Lucas S."/>
            <person name="Lapidus A."/>
            <person name="Barry K."/>
            <person name="Detter J.C."/>
            <person name="Glavina del Rio T."/>
            <person name="Hammon N."/>
            <person name="Israni S."/>
            <person name="Dalin E."/>
            <person name="Tice H."/>
            <person name="Pitluck S."/>
            <person name="Kiss H."/>
            <person name="Brettin T."/>
            <person name="Bruce D."/>
            <person name="Han C."/>
            <person name="Tapia R."/>
            <person name="Gilna P."/>
            <person name="Schmutz J."/>
            <person name="Larimer F."/>
            <person name="Land M."/>
            <person name="Hauser L."/>
            <person name="Kyrpides N."/>
            <person name="Mikhailova N."/>
            <person name="Nealson K."/>
            <person name="Konstantinidis K."/>
            <person name="Klappenbach J."/>
            <person name="Tiedje J."/>
            <person name="Richardson P."/>
        </authorList>
    </citation>
    <scope>NUCLEOTIDE SEQUENCE [LARGE SCALE GENOMIC DNA]</scope>
    <source>
        <strain>MR-4</strain>
    </source>
</reference>
<feature type="chain" id="PRO_1000021235" description="Recombination-associated protein RdgC">
    <location>
        <begin position="1"/>
        <end position="304"/>
    </location>
</feature>
<organism>
    <name type="scientific">Shewanella sp. (strain MR-4)</name>
    <dbReference type="NCBI Taxonomy" id="60480"/>
    <lineage>
        <taxon>Bacteria</taxon>
        <taxon>Pseudomonadati</taxon>
        <taxon>Pseudomonadota</taxon>
        <taxon>Gammaproteobacteria</taxon>
        <taxon>Alteromonadales</taxon>
        <taxon>Shewanellaceae</taxon>
        <taxon>Shewanella</taxon>
    </lineage>
</organism>
<comment type="function">
    <text evidence="1">May be involved in recombination.</text>
</comment>
<comment type="subcellular location">
    <subcellularLocation>
        <location evidence="1">Cytoplasm</location>
        <location evidence="1">Nucleoid</location>
    </subcellularLocation>
</comment>
<comment type="similarity">
    <text evidence="1">Belongs to the RdgC family.</text>
</comment>
<gene>
    <name evidence="1" type="primary">rdgC</name>
    <name type="ordered locus">Shewmr4_2711</name>
</gene>
<sequence>MWFKNLTLYRFNKPFSIETEALETALADFTFSPCGSQDVSKFGFSNALGKQGSTLVHSANNRHLICVTKEEKILPGQVIKESLEEKVALIEDEENRKLAKKEKDALKDEIITSLLPRAFSRRSQTRALILPELEMILVDSSSATKAEELLALLRKALGSLPVIPLSFKAPVESNLTQWLKDGSAPLPFEMQDEAELKSAADEGGIVRFKQQDLKEDEVLAHLETGKEVHKLALHFGQSIALLLQSDASVKRLKFSEEFRAGNDELGNEDPMARLDADFALMGSELVALMHALVSALGGLEETQA</sequence>